<sequence length="105" mass="11749">MGDVEKGKKIFIMKCSQCHTVEKGGKHKTGPNLHGLFGRKTGQAPGYSYTAANKNKGIIWGEDTLMEYLENPKKYIPGTKMIFVGIKKKEERADLIAYLKKATNE</sequence>
<accession>Q5RFH4</accession>
<keyword id="KW-0007">Acetylation</keyword>
<keyword id="KW-0053">Apoptosis</keyword>
<keyword id="KW-0249">Electron transport</keyword>
<keyword id="KW-0349">Heme</keyword>
<keyword id="KW-0408">Iron</keyword>
<keyword id="KW-0479">Metal-binding</keyword>
<keyword id="KW-0496">Mitochondrion</keyword>
<keyword id="KW-0597">Phosphoprotein</keyword>
<keyword id="KW-1185">Reference proteome</keyword>
<keyword id="KW-0679">Respiratory chain</keyword>
<keyword id="KW-0813">Transport</keyword>
<name>CYC_PONAB</name>
<evidence type="ECO:0000250" key="1"/>
<evidence type="ECO:0000250" key="2">
    <source>
        <dbReference type="UniProtKB" id="P62894"/>
    </source>
</evidence>
<evidence type="ECO:0000250" key="3">
    <source>
        <dbReference type="UniProtKB" id="P62897"/>
    </source>
</evidence>
<evidence type="ECO:0000255" key="4">
    <source>
        <dbReference type="PROSITE-ProRule" id="PRU00433"/>
    </source>
</evidence>
<evidence type="ECO:0000305" key="5"/>
<organism>
    <name type="scientific">Pongo abelii</name>
    <name type="common">Sumatran orangutan</name>
    <name type="synonym">Pongo pygmaeus abelii</name>
    <dbReference type="NCBI Taxonomy" id="9601"/>
    <lineage>
        <taxon>Eukaryota</taxon>
        <taxon>Metazoa</taxon>
        <taxon>Chordata</taxon>
        <taxon>Craniata</taxon>
        <taxon>Vertebrata</taxon>
        <taxon>Euteleostomi</taxon>
        <taxon>Mammalia</taxon>
        <taxon>Eutheria</taxon>
        <taxon>Euarchontoglires</taxon>
        <taxon>Primates</taxon>
        <taxon>Haplorrhini</taxon>
        <taxon>Catarrhini</taxon>
        <taxon>Hominidae</taxon>
        <taxon>Pongo</taxon>
    </lineage>
</organism>
<reference key="1">
    <citation type="submission" date="2004-11" db="EMBL/GenBank/DDBJ databases">
        <authorList>
            <consortium name="The German cDNA consortium"/>
        </authorList>
    </citation>
    <scope>NUCLEOTIDE SEQUENCE [LARGE SCALE MRNA]</scope>
    <source>
        <tissue>Heart</tissue>
    </source>
</reference>
<proteinExistence type="inferred from homology"/>
<gene>
    <name type="primary">CYCS</name>
    <name type="synonym">CYC</name>
</gene>
<comment type="function">
    <text evidence="1">Electron carrier protein. The oxidized form of the cytochrome c heme group can accept an electron from the heme group of the cytochrome c1 subunit of cytochrome reductase. Cytochrome c then transfers this electron to the cytochrome oxidase complex, the final protein carrier in the mitochondrial electron-transport chain (By similarity).</text>
</comment>
<comment type="function">
    <text evidence="1">Plays a role in apoptosis. Suppression of the anti-apoptotic members or activation of the pro-apoptotic members of the Bcl-2 family leads to altered mitochondrial membrane permeability resulting in release of cytochrome c into the cytosol. Binding of cytochrome c to Apaf-1 triggers the activation of caspase-9, which then accelerates apoptosis by activating other caspases (By similarity).</text>
</comment>
<comment type="subcellular location">
    <subcellularLocation>
        <location evidence="1">Mitochondrion intermembrane space</location>
    </subcellularLocation>
    <text evidence="1">Loosely associated with the inner membrane.</text>
</comment>
<comment type="PTM">
    <text evidence="1">Binds 1 heme c group covalently per subunit.</text>
</comment>
<comment type="PTM">
    <text evidence="1">Phosphorylation at Tyr-49 and Tyr-98 both reduce by half the turnover in the reaction with cytochrome c oxidase, down-regulating mitochondrial respiration.</text>
</comment>
<comment type="similarity">
    <text evidence="5">Belongs to the cytochrome c family.</text>
</comment>
<comment type="online information" name="Protein Spotlight">
    <link uri="https://www.proteinspotlight.org/back_issues/076"/>
    <text>Life shuttle - Issue 76 of November 2006</text>
</comment>
<dbReference type="EMBL" id="CR857183">
    <property type="protein sequence ID" value="CAH89483.1"/>
    <property type="molecule type" value="mRNA"/>
</dbReference>
<dbReference type="RefSeq" id="NP_001124639.1">
    <property type="nucleotide sequence ID" value="NM_001131167.2"/>
</dbReference>
<dbReference type="BMRB" id="Q5RFH4"/>
<dbReference type="SMR" id="Q5RFH4"/>
<dbReference type="FunCoup" id="Q5RFH4">
    <property type="interactions" value="2524"/>
</dbReference>
<dbReference type="STRING" id="9601.ENSPPYP00000019862"/>
<dbReference type="Ensembl" id="ENSPPYT00000051404.1">
    <property type="protein sequence ID" value="ENSPPYP00000041001.1"/>
    <property type="gene ID" value="ENSPPYG00000039115.1"/>
</dbReference>
<dbReference type="GeneID" id="100171479"/>
<dbReference type="KEGG" id="pon:100171479"/>
<dbReference type="CTD" id="54205"/>
<dbReference type="eggNOG" id="KOG3453">
    <property type="taxonomic scope" value="Eukaryota"/>
</dbReference>
<dbReference type="GeneTree" id="ENSGT00390000009405"/>
<dbReference type="HOGENOM" id="CLU_060944_3_0_1"/>
<dbReference type="InParanoid" id="Q5RFH4"/>
<dbReference type="OMA" id="KARCAQC"/>
<dbReference type="OrthoDB" id="9508248at2759"/>
<dbReference type="TreeFam" id="TF300226"/>
<dbReference type="Proteomes" id="UP000001595">
    <property type="component" value="Chromosome 7"/>
</dbReference>
<dbReference type="GO" id="GO:0043293">
    <property type="term" value="C:apoptosome"/>
    <property type="evidence" value="ECO:0007669"/>
    <property type="project" value="Ensembl"/>
</dbReference>
<dbReference type="GO" id="GO:0005758">
    <property type="term" value="C:mitochondrial intermembrane space"/>
    <property type="evidence" value="ECO:0007669"/>
    <property type="project" value="UniProtKB-SubCell"/>
</dbReference>
<dbReference type="GO" id="GO:0005634">
    <property type="term" value="C:nucleus"/>
    <property type="evidence" value="ECO:0007669"/>
    <property type="project" value="Ensembl"/>
</dbReference>
<dbReference type="GO" id="GO:0009055">
    <property type="term" value="F:electron transfer activity"/>
    <property type="evidence" value="ECO:0007669"/>
    <property type="project" value="InterPro"/>
</dbReference>
<dbReference type="GO" id="GO:0020037">
    <property type="term" value="F:heme binding"/>
    <property type="evidence" value="ECO:0007669"/>
    <property type="project" value="InterPro"/>
</dbReference>
<dbReference type="GO" id="GO:0046872">
    <property type="term" value="F:metal ion binding"/>
    <property type="evidence" value="ECO:0007669"/>
    <property type="project" value="UniProtKB-KW"/>
</dbReference>
<dbReference type="GO" id="GO:0006915">
    <property type="term" value="P:apoptotic process"/>
    <property type="evidence" value="ECO:0007669"/>
    <property type="project" value="UniProtKB-KW"/>
</dbReference>
<dbReference type="FunFam" id="1.10.760.10:FF:000008">
    <property type="entry name" value="Cytochrome c"/>
    <property type="match status" value="1"/>
</dbReference>
<dbReference type="Gene3D" id="1.10.760.10">
    <property type="entry name" value="Cytochrome c-like domain"/>
    <property type="match status" value="1"/>
</dbReference>
<dbReference type="InterPro" id="IPR009056">
    <property type="entry name" value="Cyt_c-like_dom"/>
</dbReference>
<dbReference type="InterPro" id="IPR036909">
    <property type="entry name" value="Cyt_c-like_dom_sf"/>
</dbReference>
<dbReference type="InterPro" id="IPR002327">
    <property type="entry name" value="Cyt_c_1A/1B"/>
</dbReference>
<dbReference type="PANTHER" id="PTHR11961">
    <property type="entry name" value="CYTOCHROME C"/>
    <property type="match status" value="1"/>
</dbReference>
<dbReference type="Pfam" id="PF00034">
    <property type="entry name" value="Cytochrom_C"/>
    <property type="match status" value="1"/>
</dbReference>
<dbReference type="PRINTS" id="PR00604">
    <property type="entry name" value="CYTCHRMECIAB"/>
</dbReference>
<dbReference type="SUPFAM" id="SSF46626">
    <property type="entry name" value="Cytochrome c"/>
    <property type="match status" value="1"/>
</dbReference>
<dbReference type="PROSITE" id="PS51007">
    <property type="entry name" value="CYTC"/>
    <property type="match status" value="1"/>
</dbReference>
<protein>
    <recommendedName>
        <fullName>Cytochrome c</fullName>
    </recommendedName>
</protein>
<feature type="initiator methionine" description="Removed" evidence="2">
    <location>
        <position position="1"/>
    </location>
</feature>
<feature type="chain" id="PRO_0000108229" description="Cytochrome c">
    <location>
        <begin position="2"/>
        <end position="105"/>
    </location>
</feature>
<feature type="binding site" description="covalent" evidence="4">
    <location>
        <position position="15"/>
    </location>
    <ligand>
        <name>heme c</name>
        <dbReference type="ChEBI" id="CHEBI:61717"/>
    </ligand>
</feature>
<feature type="binding site" description="covalent" evidence="4">
    <location>
        <position position="18"/>
    </location>
    <ligand>
        <name>heme c</name>
        <dbReference type="ChEBI" id="CHEBI:61717"/>
    </ligand>
</feature>
<feature type="binding site" description="axial binding residue" evidence="4">
    <location>
        <position position="19"/>
    </location>
    <ligand>
        <name>heme c</name>
        <dbReference type="ChEBI" id="CHEBI:61717"/>
    </ligand>
    <ligandPart>
        <name>Fe</name>
        <dbReference type="ChEBI" id="CHEBI:18248"/>
    </ligandPart>
</feature>
<feature type="binding site" description="axial binding residue" evidence="4">
    <location>
        <position position="81"/>
    </location>
    <ligand>
        <name>heme c</name>
        <dbReference type="ChEBI" id="CHEBI:61717"/>
    </ligand>
    <ligandPart>
        <name>Fe</name>
        <dbReference type="ChEBI" id="CHEBI:18248"/>
    </ligandPart>
</feature>
<feature type="modified residue" description="N-acetylglycine" evidence="2">
    <location>
        <position position="2"/>
    </location>
</feature>
<feature type="modified residue" description="Phosphotyrosine" evidence="2">
    <location>
        <position position="49"/>
    </location>
</feature>
<feature type="modified residue" description="N6-succinyllysine" evidence="3">
    <location>
        <position position="56"/>
    </location>
</feature>
<feature type="modified residue" description="N6-acetyllysine; alternate" evidence="3">
    <location>
        <position position="73"/>
    </location>
</feature>
<feature type="modified residue" description="N6-succinyllysine; alternate" evidence="3">
    <location>
        <position position="73"/>
    </location>
</feature>
<feature type="modified residue" description="Phosphotyrosine" evidence="2">
    <location>
        <position position="98"/>
    </location>
</feature>
<feature type="modified residue" description="N6-acetyllysine" evidence="3">
    <location>
        <position position="100"/>
    </location>
</feature>